<reference key="1">
    <citation type="journal article" date="2002" name="Nature">
        <title>Complete genome sequence of the model actinomycete Streptomyces coelicolor A3(2).</title>
        <authorList>
            <person name="Bentley S.D."/>
            <person name="Chater K.F."/>
            <person name="Cerdeno-Tarraga A.-M."/>
            <person name="Challis G.L."/>
            <person name="Thomson N.R."/>
            <person name="James K.D."/>
            <person name="Harris D.E."/>
            <person name="Quail M.A."/>
            <person name="Kieser H."/>
            <person name="Harper D."/>
            <person name="Bateman A."/>
            <person name="Brown S."/>
            <person name="Chandra G."/>
            <person name="Chen C.W."/>
            <person name="Collins M."/>
            <person name="Cronin A."/>
            <person name="Fraser A."/>
            <person name="Goble A."/>
            <person name="Hidalgo J."/>
            <person name="Hornsby T."/>
            <person name="Howarth S."/>
            <person name="Huang C.-H."/>
            <person name="Kieser T."/>
            <person name="Larke L."/>
            <person name="Murphy L.D."/>
            <person name="Oliver K."/>
            <person name="O'Neil S."/>
            <person name="Rabbinowitsch E."/>
            <person name="Rajandream M.A."/>
            <person name="Rutherford K.M."/>
            <person name="Rutter S."/>
            <person name="Seeger K."/>
            <person name="Saunders D."/>
            <person name="Sharp S."/>
            <person name="Squares R."/>
            <person name="Squares S."/>
            <person name="Taylor K."/>
            <person name="Warren T."/>
            <person name="Wietzorrek A."/>
            <person name="Woodward J.R."/>
            <person name="Barrell B.G."/>
            <person name="Parkhill J."/>
            <person name="Hopwood D.A."/>
        </authorList>
    </citation>
    <scope>NUCLEOTIDE SEQUENCE [LARGE SCALE GENOMIC DNA]</scope>
    <source>
        <strain>ATCC BAA-471 / A3(2) / M145</strain>
    </source>
</reference>
<comment type="function">
    <text evidence="1">Involved in peptide bond synthesis. Stimulates efficient translation and peptide-bond synthesis on native or reconstituted 70S ribosomes in vitro. Probably functions indirectly by altering the affinity of the ribosome for aminoacyl-tRNA, thus increasing their reactivity as acceptors for peptidyl transferase.</text>
</comment>
<comment type="pathway">
    <text evidence="1">Protein biosynthesis; polypeptide chain elongation.</text>
</comment>
<comment type="subcellular location">
    <subcellularLocation>
        <location evidence="1">Cytoplasm</location>
    </subcellularLocation>
</comment>
<comment type="similarity">
    <text evidence="1">Belongs to the elongation factor P family.</text>
</comment>
<dbReference type="EMBL" id="AL939109">
    <property type="protein sequence ID" value="CAB93371.1"/>
    <property type="molecule type" value="Genomic_DNA"/>
</dbReference>
<dbReference type="RefSeq" id="NP_625771.1">
    <property type="nucleotide sequence ID" value="NC_003888.3"/>
</dbReference>
<dbReference type="RefSeq" id="WP_003977335.1">
    <property type="nucleotide sequence ID" value="NZ_VNID01000021.1"/>
</dbReference>
<dbReference type="SMR" id="Q9KXQ9"/>
<dbReference type="FunCoup" id="Q9KXQ9">
    <property type="interactions" value="258"/>
</dbReference>
<dbReference type="STRING" id="100226.gene:17759077"/>
<dbReference type="PaxDb" id="100226-SCO1491"/>
<dbReference type="GeneID" id="96651658"/>
<dbReference type="KEGG" id="sco:SCO1491"/>
<dbReference type="PATRIC" id="fig|100226.15.peg.1500"/>
<dbReference type="eggNOG" id="COG0231">
    <property type="taxonomic scope" value="Bacteria"/>
</dbReference>
<dbReference type="HOGENOM" id="CLU_074944_0_1_11"/>
<dbReference type="InParanoid" id="Q9KXQ9"/>
<dbReference type="OrthoDB" id="9801844at2"/>
<dbReference type="PhylomeDB" id="Q9KXQ9"/>
<dbReference type="UniPathway" id="UPA00345"/>
<dbReference type="Proteomes" id="UP000001973">
    <property type="component" value="Chromosome"/>
</dbReference>
<dbReference type="GO" id="GO:0005737">
    <property type="term" value="C:cytoplasm"/>
    <property type="evidence" value="ECO:0000318"/>
    <property type="project" value="GO_Central"/>
</dbReference>
<dbReference type="GO" id="GO:0003746">
    <property type="term" value="F:translation elongation factor activity"/>
    <property type="evidence" value="ECO:0000318"/>
    <property type="project" value="GO_Central"/>
</dbReference>
<dbReference type="GO" id="GO:0043043">
    <property type="term" value="P:peptide biosynthetic process"/>
    <property type="evidence" value="ECO:0007669"/>
    <property type="project" value="InterPro"/>
</dbReference>
<dbReference type="CDD" id="cd04470">
    <property type="entry name" value="S1_EF-P_repeat_1"/>
    <property type="match status" value="1"/>
</dbReference>
<dbReference type="CDD" id="cd05794">
    <property type="entry name" value="S1_EF-P_repeat_2"/>
    <property type="match status" value="1"/>
</dbReference>
<dbReference type="FunFam" id="2.30.30.30:FF:000003">
    <property type="entry name" value="Elongation factor P"/>
    <property type="match status" value="1"/>
</dbReference>
<dbReference type="FunFam" id="2.40.50.140:FF:000004">
    <property type="entry name" value="Elongation factor P"/>
    <property type="match status" value="1"/>
</dbReference>
<dbReference type="FunFam" id="2.40.50.140:FF:000009">
    <property type="entry name" value="Elongation factor P"/>
    <property type="match status" value="1"/>
</dbReference>
<dbReference type="Gene3D" id="2.30.30.30">
    <property type="match status" value="1"/>
</dbReference>
<dbReference type="Gene3D" id="2.40.50.140">
    <property type="entry name" value="Nucleic acid-binding proteins"/>
    <property type="match status" value="2"/>
</dbReference>
<dbReference type="HAMAP" id="MF_00141">
    <property type="entry name" value="EF_P"/>
    <property type="match status" value="1"/>
</dbReference>
<dbReference type="InterPro" id="IPR015365">
    <property type="entry name" value="Elong-fact-P_C"/>
</dbReference>
<dbReference type="InterPro" id="IPR012340">
    <property type="entry name" value="NA-bd_OB-fold"/>
</dbReference>
<dbReference type="InterPro" id="IPR014722">
    <property type="entry name" value="Rib_uL2_dom2"/>
</dbReference>
<dbReference type="InterPro" id="IPR020599">
    <property type="entry name" value="Transl_elong_fac_P/YeiP"/>
</dbReference>
<dbReference type="InterPro" id="IPR013185">
    <property type="entry name" value="Transl_elong_KOW-like"/>
</dbReference>
<dbReference type="InterPro" id="IPR001059">
    <property type="entry name" value="Transl_elong_P/YeiP_cen"/>
</dbReference>
<dbReference type="InterPro" id="IPR013852">
    <property type="entry name" value="Transl_elong_P/YeiP_CS"/>
</dbReference>
<dbReference type="InterPro" id="IPR011768">
    <property type="entry name" value="Transl_elongation_fac_P"/>
</dbReference>
<dbReference type="InterPro" id="IPR008991">
    <property type="entry name" value="Translation_prot_SH3-like_sf"/>
</dbReference>
<dbReference type="NCBIfam" id="TIGR00038">
    <property type="entry name" value="efp"/>
    <property type="match status" value="1"/>
</dbReference>
<dbReference type="NCBIfam" id="NF001810">
    <property type="entry name" value="PRK00529.1"/>
    <property type="match status" value="1"/>
</dbReference>
<dbReference type="PANTHER" id="PTHR30053">
    <property type="entry name" value="ELONGATION FACTOR P"/>
    <property type="match status" value="1"/>
</dbReference>
<dbReference type="PANTHER" id="PTHR30053:SF12">
    <property type="entry name" value="ELONGATION FACTOR P (EF-P) FAMILY PROTEIN"/>
    <property type="match status" value="1"/>
</dbReference>
<dbReference type="Pfam" id="PF01132">
    <property type="entry name" value="EFP"/>
    <property type="match status" value="1"/>
</dbReference>
<dbReference type="Pfam" id="PF08207">
    <property type="entry name" value="EFP_N"/>
    <property type="match status" value="1"/>
</dbReference>
<dbReference type="Pfam" id="PF09285">
    <property type="entry name" value="Elong-fact-P_C"/>
    <property type="match status" value="1"/>
</dbReference>
<dbReference type="PIRSF" id="PIRSF005901">
    <property type="entry name" value="EF-P"/>
    <property type="match status" value="1"/>
</dbReference>
<dbReference type="SMART" id="SM01185">
    <property type="entry name" value="EFP"/>
    <property type="match status" value="1"/>
</dbReference>
<dbReference type="SMART" id="SM00841">
    <property type="entry name" value="Elong-fact-P_C"/>
    <property type="match status" value="1"/>
</dbReference>
<dbReference type="SUPFAM" id="SSF50249">
    <property type="entry name" value="Nucleic acid-binding proteins"/>
    <property type="match status" value="2"/>
</dbReference>
<dbReference type="SUPFAM" id="SSF50104">
    <property type="entry name" value="Translation proteins SH3-like domain"/>
    <property type="match status" value="1"/>
</dbReference>
<dbReference type="PROSITE" id="PS01275">
    <property type="entry name" value="EFP"/>
    <property type="match status" value="1"/>
</dbReference>
<evidence type="ECO:0000255" key="1">
    <source>
        <dbReference type="HAMAP-Rule" id="MF_00141"/>
    </source>
</evidence>
<sequence>MASTNDLKNGLVLKLEGGQLWSVVEFQHVKPGKGPAFVRTKLKNVLSGKVVDKTFNAGVKVETATVDKRDMQFSYMDGDYFVFMDMETYDQLMIDRKVVGDAANFLVEGFEATVAQHEGEVLFVELPAAVELTIQETEPGVQGDRSTGGTKPATLETGHQINVPLFITTGEKIKVDTRTSDYLGRVNS</sequence>
<accession>Q9KXQ9</accession>
<name>EFP_STRCO</name>
<gene>
    <name evidence="1" type="primary">efp</name>
    <name type="ordered locus">SCO1491</name>
    <name type="ORF">SC9C5.15c</name>
</gene>
<feature type="chain" id="PRO_0000094339" description="Elongation factor P">
    <location>
        <begin position="1"/>
        <end position="188"/>
    </location>
</feature>
<proteinExistence type="inferred from homology"/>
<keyword id="KW-0963">Cytoplasm</keyword>
<keyword id="KW-0251">Elongation factor</keyword>
<keyword id="KW-0648">Protein biosynthesis</keyword>
<keyword id="KW-1185">Reference proteome</keyword>
<organism>
    <name type="scientific">Streptomyces coelicolor (strain ATCC BAA-471 / A3(2) / M145)</name>
    <dbReference type="NCBI Taxonomy" id="100226"/>
    <lineage>
        <taxon>Bacteria</taxon>
        <taxon>Bacillati</taxon>
        <taxon>Actinomycetota</taxon>
        <taxon>Actinomycetes</taxon>
        <taxon>Kitasatosporales</taxon>
        <taxon>Streptomycetaceae</taxon>
        <taxon>Streptomyces</taxon>
        <taxon>Streptomyces albidoflavus group</taxon>
    </lineage>
</organism>
<protein>
    <recommendedName>
        <fullName evidence="1">Elongation factor P</fullName>
        <shortName evidence="1">EF-P</shortName>
    </recommendedName>
</protein>